<feature type="chain" id="PRO_0000456372" description="Kiwa protein KwaA">
    <location>
        <begin position="1"/>
        <end position="195"/>
    </location>
</feature>
<feature type="transmembrane region" description="Helical" evidence="1">
    <location>
        <begin position="10"/>
        <end position="30"/>
    </location>
</feature>
<feature type="transmembrane region" description="Helical" evidence="1">
    <location>
        <begin position="46"/>
        <end position="66"/>
    </location>
</feature>
<feature type="transmembrane region" description="Helical" evidence="1">
    <location>
        <begin position="117"/>
        <end position="137"/>
    </location>
</feature>
<reference key="1">
    <citation type="journal article" date="2012" name="J. Bacteriol.">
        <title>Escherichia coli serotype O55:H7 diversity supports parallel acquisition of bacteriophage at Shiga toxin phage insertion sites during evolution of the O157:H7 lineage.</title>
        <authorList>
            <person name="Kyle J.L."/>
            <person name="Cummings C.A."/>
            <person name="Parker C.T."/>
            <person name="Quinones B."/>
            <person name="Vatta P."/>
            <person name="Newton E."/>
            <person name="Huynh S."/>
            <person name="Swimley M."/>
            <person name="Degoricija L."/>
            <person name="Barker M."/>
            <person name="Fontanoz S."/>
            <person name="Nguyen K."/>
            <person name="Patel R."/>
            <person name="Fang R."/>
            <person name="Tebbs R."/>
            <person name="Petrauskene O."/>
            <person name="Furtado M."/>
            <person name="Mandrell R.E."/>
        </authorList>
    </citation>
    <scope>NUCLEOTIDE SEQUENCE [LARGE SCALE GENOMIC DNA]</scope>
    <source>
        <strain>RM12579 / EPEC</strain>
    </source>
</reference>
<reference key="2">
    <citation type="journal article" date="2018" name="Science">
        <title>Systematic discovery of antiphage defense systems in the microbial pangenome.</title>
        <authorList>
            <person name="Doron S."/>
            <person name="Melamed S."/>
            <person name="Ofir G."/>
            <person name="Leavitt A."/>
            <person name="Lopatina A."/>
            <person name="Keren M."/>
            <person name="Amitai G."/>
            <person name="Sorek R."/>
        </authorList>
    </citation>
    <scope>FUNCTION</scope>
    <scope>DISRUPTION PHENOTYPE</scope>
    <scope>EXPRESSION IN E.COLI</scope>
    <source>
        <strain>RM12579 / EPEC</strain>
    </source>
</reference>
<sequence length="195" mass="22507">MQRNTYNKVGLYILSLAMLFVFIIILTAKIPFCFTSDCSFIGLKKLVLTNIVPIVCFVFFLFSIYFYNRLKNITKYNGQDSVKITSCQSESYESLTFLATYIVPFMGFSFEDMQKNIAYLLLVVVIGIIFIKTDKYYANPTLALFGFKLYRVNILHPGSGETKNLIAISNDVLKVDDNVYYSFFDEFVFIARKKI</sequence>
<dbReference type="EMBL" id="CP003109">
    <property type="protein sequence ID" value="AEZ43441.1"/>
    <property type="molecule type" value="Genomic_DNA"/>
</dbReference>
<dbReference type="RefSeq" id="WP_001189512.1">
    <property type="nucleotide sequence ID" value="NC_017656.1"/>
</dbReference>
<dbReference type="KEGG" id="elr:ECO55CA74_24535"/>
<dbReference type="GO" id="GO:0005886">
    <property type="term" value="C:plasma membrane"/>
    <property type="evidence" value="ECO:0007669"/>
    <property type="project" value="UniProtKB-SubCell"/>
</dbReference>
<dbReference type="GO" id="GO:0051607">
    <property type="term" value="P:defense response to virus"/>
    <property type="evidence" value="ECO:0007669"/>
    <property type="project" value="UniProtKB-KW"/>
</dbReference>
<dbReference type="InterPro" id="IPR048118">
    <property type="entry name" value="KwaA"/>
</dbReference>
<dbReference type="NCBIfam" id="NF041622">
    <property type="entry name" value="KwaA"/>
    <property type="match status" value="1"/>
</dbReference>
<comment type="function">
    <text evidence="2">Component of antiviral defense system Kiwa, composed of KwaA and KwaB. Expression of Kiwa in E.coli (strain MG1655) confers resistance to phages lambda and SECphi18.</text>
</comment>
<comment type="subcellular location">
    <subcellularLocation>
        <location evidence="4">Cell inner membrane</location>
        <topology evidence="1">Multi-pass membrane protein</topology>
    </subcellularLocation>
</comment>
<comment type="disruption phenotype">
    <text evidence="2">Cannot be deleted in a Kiwa-containing strain of E.coli.</text>
</comment>
<keyword id="KW-0051">Antiviral defense</keyword>
<keyword id="KW-0997">Cell inner membrane</keyword>
<keyword id="KW-1003">Cell membrane</keyword>
<keyword id="KW-0472">Membrane</keyword>
<keyword id="KW-0812">Transmembrane</keyword>
<keyword id="KW-1133">Transmembrane helix</keyword>
<evidence type="ECO:0000255" key="1"/>
<evidence type="ECO:0000269" key="2">
    <source>
    </source>
</evidence>
<evidence type="ECO:0000303" key="3">
    <source>
    </source>
</evidence>
<evidence type="ECO:0000305" key="4"/>
<evidence type="ECO:0000312" key="5">
    <source>
        <dbReference type="EMBL" id="AEZ43441.1"/>
    </source>
</evidence>
<name>KWAA_ECORM</name>
<organism>
    <name type="scientific">Escherichia coli O55:H7 (strain RM12579 / EPEC)</name>
    <dbReference type="NCBI Taxonomy" id="1048689"/>
    <lineage>
        <taxon>Bacteria</taxon>
        <taxon>Pseudomonadati</taxon>
        <taxon>Pseudomonadota</taxon>
        <taxon>Gammaproteobacteria</taxon>
        <taxon>Enterobacterales</taxon>
        <taxon>Enterobacteriaceae</taxon>
        <taxon>Escherichia</taxon>
    </lineage>
</organism>
<protein>
    <recommendedName>
        <fullName evidence="3">Kiwa protein KwaA</fullName>
    </recommendedName>
</protein>
<gene>
    <name evidence="3" type="primary">kwaA</name>
    <name evidence="5" type="ORF">ECO55CA74_24535</name>
</gene>
<proteinExistence type="inferred from homology"/>
<accession>P0DW45</accession>